<proteinExistence type="inferred from homology"/>
<dbReference type="EC" id="2.1.1.41"/>
<dbReference type="EMBL" id="CR382121">
    <property type="protein sequence ID" value="CAH02664.1"/>
    <property type="molecule type" value="Genomic_DNA"/>
</dbReference>
<dbReference type="RefSeq" id="XP_451076.1">
    <property type="nucleotide sequence ID" value="XM_451076.1"/>
</dbReference>
<dbReference type="SMR" id="Q6CYB3"/>
<dbReference type="FunCoup" id="Q6CYB3">
    <property type="interactions" value="338"/>
</dbReference>
<dbReference type="STRING" id="284590.Q6CYB3"/>
<dbReference type="PaxDb" id="284590-Q6CYB3"/>
<dbReference type="KEGG" id="kla:KLLA0_A01738g"/>
<dbReference type="eggNOG" id="KOG1269">
    <property type="taxonomic scope" value="Eukaryota"/>
</dbReference>
<dbReference type="HOGENOM" id="CLU_039068_5_0_1"/>
<dbReference type="InParanoid" id="Q6CYB3"/>
<dbReference type="OMA" id="AFNKAMH"/>
<dbReference type="UniPathway" id="UPA00768">
    <property type="reaction ID" value="UER00760"/>
</dbReference>
<dbReference type="Proteomes" id="UP000000598">
    <property type="component" value="Chromosome A"/>
</dbReference>
<dbReference type="GO" id="GO:0005783">
    <property type="term" value="C:endoplasmic reticulum"/>
    <property type="evidence" value="ECO:0007669"/>
    <property type="project" value="TreeGrafter"/>
</dbReference>
<dbReference type="GO" id="GO:0003838">
    <property type="term" value="F:sterol 24-C-methyltransferase activity"/>
    <property type="evidence" value="ECO:0007669"/>
    <property type="project" value="UniProtKB-EC"/>
</dbReference>
<dbReference type="GO" id="GO:0006696">
    <property type="term" value="P:ergosterol biosynthetic process"/>
    <property type="evidence" value="ECO:0007669"/>
    <property type="project" value="TreeGrafter"/>
</dbReference>
<dbReference type="GO" id="GO:0032259">
    <property type="term" value="P:methylation"/>
    <property type="evidence" value="ECO:0007669"/>
    <property type="project" value="UniProtKB-KW"/>
</dbReference>
<dbReference type="CDD" id="cd02440">
    <property type="entry name" value="AdoMet_MTases"/>
    <property type="match status" value="1"/>
</dbReference>
<dbReference type="FunFam" id="3.40.50.150:FF:000121">
    <property type="entry name" value="Sterol 24-C-methyltransferase"/>
    <property type="match status" value="1"/>
</dbReference>
<dbReference type="Gene3D" id="3.40.50.150">
    <property type="entry name" value="Vaccinia Virus protein VP39"/>
    <property type="match status" value="1"/>
</dbReference>
<dbReference type="InterPro" id="IPR050447">
    <property type="entry name" value="Erg6_SMT_methyltransf"/>
</dbReference>
<dbReference type="InterPro" id="IPR013216">
    <property type="entry name" value="Methyltransf_11"/>
</dbReference>
<dbReference type="InterPro" id="IPR030384">
    <property type="entry name" value="MeTrfase_SMT"/>
</dbReference>
<dbReference type="InterPro" id="IPR029063">
    <property type="entry name" value="SAM-dependent_MTases_sf"/>
</dbReference>
<dbReference type="InterPro" id="IPR013705">
    <property type="entry name" value="Sterol_MeTrfase_C"/>
</dbReference>
<dbReference type="PANTHER" id="PTHR44068:SF1">
    <property type="entry name" value="HYPOTHETICAL LOC100005854"/>
    <property type="match status" value="1"/>
</dbReference>
<dbReference type="PANTHER" id="PTHR44068">
    <property type="entry name" value="ZGC:194242"/>
    <property type="match status" value="1"/>
</dbReference>
<dbReference type="Pfam" id="PF08241">
    <property type="entry name" value="Methyltransf_11"/>
    <property type="match status" value="1"/>
</dbReference>
<dbReference type="Pfam" id="PF08498">
    <property type="entry name" value="Sterol_MT_C"/>
    <property type="match status" value="1"/>
</dbReference>
<dbReference type="SUPFAM" id="SSF53335">
    <property type="entry name" value="S-adenosyl-L-methionine-dependent methyltransferases"/>
    <property type="match status" value="1"/>
</dbReference>
<dbReference type="PROSITE" id="PS51685">
    <property type="entry name" value="SAM_MT_ERG6_SMT"/>
    <property type="match status" value="1"/>
</dbReference>
<feature type="chain" id="PRO_0000124793" description="Sterol 24-C-methyltransferase">
    <location>
        <begin position="1"/>
        <end position="371"/>
    </location>
</feature>
<name>ERG6_KLULA</name>
<gene>
    <name type="primary">ERG6</name>
    <name type="ordered locus">KLLA0A01738g</name>
</gene>
<protein>
    <recommendedName>
        <fullName>Sterol 24-C-methyltransferase</fullName>
        <ecNumber>2.1.1.41</ecNumber>
    </recommendedName>
    <alternativeName>
        <fullName>Delta(24)-sterol C-methyltransferase</fullName>
    </alternativeName>
</protein>
<sequence>MSESNELRKRQAEFTKELHGNNVTKSGFSALVSKNKSAQTEAVAKYLKHWDGKTDADAERRRLEDYNESTHSYYNVVTDFYEYGWGSSFHFSRFFKGESFSASVARHEHYLAYKAGIKENDLILDVGCGVGGPARTISRFTGCNIIGLNNNDYQIQKANYYAKRDHLDSKLSFVKGDFMKMEFDENTFDSVYAIEATCHAPTFEGVYGEIYKVLKPGGTFAVYEWVMTDKYDETNPEHRKIAYEIELGDGIPKMYSVDAARDALSKVGFEILEENDLADNDDEIPWYAPLTGEWKYVNSVADLATFFRTSRLGRAFTTSMVTVFEKLGLAPKGSVSVTNALEEAAVGLVAGGEKKLFTPMMLFVAKKPEQK</sequence>
<comment type="function">
    <text evidence="1">Catalyzes the methyl transfer from S-adenosyl-methionine to the C-24 of zymosterol to form fecosterol.</text>
</comment>
<comment type="catalytic activity">
    <reaction>
        <text>zymosterol + S-adenosyl-L-methionine = fecosterol + S-adenosyl-L-homocysteine + H(+)</text>
        <dbReference type="Rhea" id="RHEA:21128"/>
        <dbReference type="ChEBI" id="CHEBI:15378"/>
        <dbReference type="ChEBI" id="CHEBI:17038"/>
        <dbReference type="ChEBI" id="CHEBI:18252"/>
        <dbReference type="ChEBI" id="CHEBI:57856"/>
        <dbReference type="ChEBI" id="CHEBI:59789"/>
        <dbReference type="EC" id="2.1.1.41"/>
    </reaction>
</comment>
<comment type="pathway">
    <text>Steroid metabolism; ergosterol biosynthesis; ergosterol from zymosterol: step 1/5.</text>
</comment>
<comment type="similarity">
    <text evidence="2">Belongs to the class I-like SAM-binding methyltransferase superfamily. Erg6/SMT family.</text>
</comment>
<evidence type="ECO:0000250" key="1"/>
<evidence type="ECO:0000255" key="2">
    <source>
        <dbReference type="PROSITE-ProRule" id="PRU01022"/>
    </source>
</evidence>
<organism>
    <name type="scientific">Kluyveromyces lactis (strain ATCC 8585 / CBS 2359 / DSM 70799 / NBRC 1267 / NRRL Y-1140 / WM37)</name>
    <name type="common">Yeast</name>
    <name type="synonym">Candida sphaerica</name>
    <dbReference type="NCBI Taxonomy" id="284590"/>
    <lineage>
        <taxon>Eukaryota</taxon>
        <taxon>Fungi</taxon>
        <taxon>Dikarya</taxon>
        <taxon>Ascomycota</taxon>
        <taxon>Saccharomycotina</taxon>
        <taxon>Saccharomycetes</taxon>
        <taxon>Saccharomycetales</taxon>
        <taxon>Saccharomycetaceae</taxon>
        <taxon>Kluyveromyces</taxon>
    </lineage>
</organism>
<accession>Q6CYB3</accession>
<keyword id="KW-0444">Lipid biosynthesis</keyword>
<keyword id="KW-0443">Lipid metabolism</keyword>
<keyword id="KW-0489">Methyltransferase</keyword>
<keyword id="KW-1185">Reference proteome</keyword>
<keyword id="KW-0949">S-adenosyl-L-methionine</keyword>
<keyword id="KW-0752">Steroid biosynthesis</keyword>
<keyword id="KW-0753">Steroid metabolism</keyword>
<keyword id="KW-0756">Sterol biosynthesis</keyword>
<keyword id="KW-1207">Sterol metabolism</keyword>
<keyword id="KW-0808">Transferase</keyword>
<reference key="1">
    <citation type="journal article" date="2004" name="Nature">
        <title>Genome evolution in yeasts.</title>
        <authorList>
            <person name="Dujon B."/>
            <person name="Sherman D."/>
            <person name="Fischer G."/>
            <person name="Durrens P."/>
            <person name="Casaregola S."/>
            <person name="Lafontaine I."/>
            <person name="de Montigny J."/>
            <person name="Marck C."/>
            <person name="Neuveglise C."/>
            <person name="Talla E."/>
            <person name="Goffard N."/>
            <person name="Frangeul L."/>
            <person name="Aigle M."/>
            <person name="Anthouard V."/>
            <person name="Babour A."/>
            <person name="Barbe V."/>
            <person name="Barnay S."/>
            <person name="Blanchin S."/>
            <person name="Beckerich J.-M."/>
            <person name="Beyne E."/>
            <person name="Bleykasten C."/>
            <person name="Boisrame A."/>
            <person name="Boyer J."/>
            <person name="Cattolico L."/>
            <person name="Confanioleri F."/>
            <person name="de Daruvar A."/>
            <person name="Despons L."/>
            <person name="Fabre E."/>
            <person name="Fairhead C."/>
            <person name="Ferry-Dumazet H."/>
            <person name="Groppi A."/>
            <person name="Hantraye F."/>
            <person name="Hennequin C."/>
            <person name="Jauniaux N."/>
            <person name="Joyet P."/>
            <person name="Kachouri R."/>
            <person name="Kerrest A."/>
            <person name="Koszul R."/>
            <person name="Lemaire M."/>
            <person name="Lesur I."/>
            <person name="Ma L."/>
            <person name="Muller H."/>
            <person name="Nicaud J.-M."/>
            <person name="Nikolski M."/>
            <person name="Oztas S."/>
            <person name="Ozier-Kalogeropoulos O."/>
            <person name="Pellenz S."/>
            <person name="Potier S."/>
            <person name="Richard G.-F."/>
            <person name="Straub M.-L."/>
            <person name="Suleau A."/>
            <person name="Swennen D."/>
            <person name="Tekaia F."/>
            <person name="Wesolowski-Louvel M."/>
            <person name="Westhof E."/>
            <person name="Wirth B."/>
            <person name="Zeniou-Meyer M."/>
            <person name="Zivanovic Y."/>
            <person name="Bolotin-Fukuhara M."/>
            <person name="Thierry A."/>
            <person name="Bouchier C."/>
            <person name="Caudron B."/>
            <person name="Scarpelli C."/>
            <person name="Gaillardin C."/>
            <person name="Weissenbach J."/>
            <person name="Wincker P."/>
            <person name="Souciet J.-L."/>
        </authorList>
    </citation>
    <scope>NUCLEOTIDE SEQUENCE [LARGE SCALE GENOMIC DNA]</scope>
    <source>
        <strain>ATCC 8585 / CBS 2359 / DSM 70799 / NBRC 1267 / NRRL Y-1140 / WM37</strain>
    </source>
</reference>